<dbReference type="EMBL" id="AE014075">
    <property type="protein sequence ID" value="AAN79244.1"/>
    <property type="status" value="ALT_INIT"/>
    <property type="molecule type" value="Genomic_DNA"/>
</dbReference>
<dbReference type="RefSeq" id="WP_001018618.1">
    <property type="nucleotide sequence ID" value="NZ_CP051263.1"/>
</dbReference>
<dbReference type="BMRB" id="P61950"/>
<dbReference type="SMR" id="P61950"/>
<dbReference type="STRING" id="199310.c0771"/>
<dbReference type="GeneID" id="93776800"/>
<dbReference type="KEGG" id="ecc:c0771"/>
<dbReference type="eggNOG" id="COG0716">
    <property type="taxonomic scope" value="Bacteria"/>
</dbReference>
<dbReference type="HOGENOM" id="CLU_051402_1_1_6"/>
<dbReference type="Proteomes" id="UP000001410">
    <property type="component" value="Chromosome"/>
</dbReference>
<dbReference type="GO" id="GO:0009055">
    <property type="term" value="F:electron transfer activity"/>
    <property type="evidence" value="ECO:0007669"/>
    <property type="project" value="InterPro"/>
</dbReference>
<dbReference type="GO" id="GO:0010181">
    <property type="term" value="F:FMN binding"/>
    <property type="evidence" value="ECO:0007669"/>
    <property type="project" value="InterPro"/>
</dbReference>
<dbReference type="FunFam" id="3.40.50.360:FF:000002">
    <property type="entry name" value="Flavodoxin"/>
    <property type="match status" value="1"/>
</dbReference>
<dbReference type="Gene3D" id="3.40.50.360">
    <property type="match status" value="1"/>
</dbReference>
<dbReference type="InterPro" id="IPR050619">
    <property type="entry name" value="Flavodoxin"/>
</dbReference>
<dbReference type="InterPro" id="IPR008254">
    <property type="entry name" value="Flavodoxin/NO_synth"/>
</dbReference>
<dbReference type="InterPro" id="IPR001226">
    <property type="entry name" value="Flavodoxin_CS"/>
</dbReference>
<dbReference type="InterPro" id="IPR010086">
    <property type="entry name" value="Flavodoxin_lc"/>
</dbReference>
<dbReference type="InterPro" id="IPR029039">
    <property type="entry name" value="Flavoprotein-like_sf"/>
</dbReference>
<dbReference type="NCBIfam" id="TIGR01752">
    <property type="entry name" value="flav_long"/>
    <property type="match status" value="1"/>
</dbReference>
<dbReference type="NCBIfam" id="NF006735">
    <property type="entry name" value="PRK09267.1-1"/>
    <property type="match status" value="1"/>
</dbReference>
<dbReference type="NCBIfam" id="NF006736">
    <property type="entry name" value="PRK09267.1-2"/>
    <property type="match status" value="1"/>
</dbReference>
<dbReference type="NCBIfam" id="NF006737">
    <property type="entry name" value="PRK09267.1-3"/>
    <property type="match status" value="1"/>
</dbReference>
<dbReference type="NCBIfam" id="NF006739">
    <property type="entry name" value="PRK09267.1-5"/>
    <property type="match status" value="1"/>
</dbReference>
<dbReference type="PANTHER" id="PTHR42809:SF1">
    <property type="entry name" value="FLAVODOXIN 1"/>
    <property type="match status" value="1"/>
</dbReference>
<dbReference type="PANTHER" id="PTHR42809">
    <property type="entry name" value="FLAVODOXIN 2"/>
    <property type="match status" value="1"/>
</dbReference>
<dbReference type="Pfam" id="PF00258">
    <property type="entry name" value="Flavodoxin_1"/>
    <property type="match status" value="1"/>
</dbReference>
<dbReference type="PIRSF" id="PIRSF038996">
    <property type="entry name" value="FldA"/>
    <property type="match status" value="1"/>
</dbReference>
<dbReference type="SUPFAM" id="SSF52218">
    <property type="entry name" value="Flavoproteins"/>
    <property type="match status" value="1"/>
</dbReference>
<dbReference type="PROSITE" id="PS00201">
    <property type="entry name" value="FLAVODOXIN"/>
    <property type="match status" value="1"/>
</dbReference>
<dbReference type="PROSITE" id="PS50902">
    <property type="entry name" value="FLAVODOXIN_LIKE"/>
    <property type="match status" value="1"/>
</dbReference>
<proteinExistence type="inferred from homology"/>
<name>FLAV_ECOL6</name>
<reference key="1">
    <citation type="journal article" date="2002" name="Proc. Natl. Acad. Sci. U.S.A.">
        <title>Extensive mosaic structure revealed by the complete genome sequence of uropathogenic Escherichia coli.</title>
        <authorList>
            <person name="Welch R.A."/>
            <person name="Burland V."/>
            <person name="Plunkett G. III"/>
            <person name="Redford P."/>
            <person name="Roesch P."/>
            <person name="Rasko D."/>
            <person name="Buckles E.L."/>
            <person name="Liou S.-R."/>
            <person name="Boutin A."/>
            <person name="Hackett J."/>
            <person name="Stroud D."/>
            <person name="Mayhew G.F."/>
            <person name="Rose D.J."/>
            <person name="Zhou S."/>
            <person name="Schwartz D.C."/>
            <person name="Perna N.T."/>
            <person name="Mobley H.L.T."/>
            <person name="Donnenberg M.S."/>
            <person name="Blattner F.R."/>
        </authorList>
    </citation>
    <scope>NUCLEOTIDE SEQUENCE [LARGE SCALE GENOMIC DNA]</scope>
    <source>
        <strain>CFT073 / ATCC 700928 / UPEC</strain>
    </source>
</reference>
<gene>
    <name type="primary">fldA</name>
    <name type="ordered locus">c0771</name>
</gene>
<protein>
    <recommendedName>
        <fullName>Flavodoxin 1</fullName>
    </recommendedName>
</protein>
<feature type="initiator methionine" description="Removed" evidence="1">
    <location>
        <position position="1"/>
    </location>
</feature>
<feature type="chain" id="PRO_0000171623" description="Flavodoxin 1">
    <location>
        <begin position="2"/>
        <end position="176"/>
    </location>
</feature>
<feature type="domain" description="Flavodoxin-like" evidence="2">
    <location>
        <begin position="4"/>
        <end position="165"/>
    </location>
</feature>
<sequence>MAITGIFFGSDTGNTENIAKMIQKQLGKDVADVHDIAKSSKEDLEAYDILLLGIPTWYYGEAQCDWDDFFPTLEEIDFNGKLVALFGCGDQEDYAEYFCDALGTIRDIIEPRGATIVGHWPTAGYHFEASKGLADDDHFVGLAIDEDRQPELTAERVEKWVKQISEELHLDEILNA</sequence>
<evidence type="ECO:0000250" key="1"/>
<evidence type="ECO:0000255" key="2">
    <source>
        <dbReference type="PROSITE-ProRule" id="PRU00088"/>
    </source>
</evidence>
<evidence type="ECO:0000305" key="3"/>
<accession>P61950</accession>
<accession>P23243</accession>
<keyword id="KW-0249">Electron transport</keyword>
<keyword id="KW-0285">Flavoprotein</keyword>
<keyword id="KW-0288">FMN</keyword>
<keyword id="KW-1185">Reference proteome</keyword>
<keyword id="KW-0813">Transport</keyword>
<comment type="function">
    <text evidence="1 3">Low-potential electron donor to a number of redox enzymes (Potential). Involved in the reactivation of inactive cob(II)alamin in methionine synthase (By similarity).</text>
</comment>
<comment type="cofactor">
    <cofactor evidence="1">
        <name>FMN</name>
        <dbReference type="ChEBI" id="CHEBI:58210"/>
    </cofactor>
</comment>
<comment type="similarity">
    <text evidence="3">Belongs to the flavodoxin family.</text>
</comment>
<comment type="sequence caution" evidence="3">
    <conflict type="erroneous initiation">
        <sequence resource="EMBL-CDS" id="AAN79244"/>
    </conflict>
</comment>
<organism>
    <name type="scientific">Escherichia coli O6:H1 (strain CFT073 / ATCC 700928 / UPEC)</name>
    <dbReference type="NCBI Taxonomy" id="199310"/>
    <lineage>
        <taxon>Bacteria</taxon>
        <taxon>Pseudomonadati</taxon>
        <taxon>Pseudomonadota</taxon>
        <taxon>Gammaproteobacteria</taxon>
        <taxon>Enterobacterales</taxon>
        <taxon>Enterobacteriaceae</taxon>
        <taxon>Escherichia</taxon>
    </lineage>
</organism>